<accession>Q9HAA7</accession>
<name>YG046_HUMAN</name>
<comment type="caution">
    <text evidence="2">Product of a dubious CDS prediction.</text>
</comment>
<dbReference type="EMBL" id="AK021933">
    <property type="protein sequence ID" value="BAB13942.1"/>
    <property type="molecule type" value="mRNA"/>
</dbReference>
<dbReference type="IntAct" id="Q9HAA7">
    <property type="interactions" value="2"/>
</dbReference>
<dbReference type="BioMuta" id="-"/>
<dbReference type="neXtProt" id="NX_Q9HAA7"/>
<dbReference type="InParanoid" id="Q9HAA7"/>
<dbReference type="PAN-GO" id="Q9HAA7">
    <property type="GO annotations" value="0 GO annotations based on evolutionary models"/>
</dbReference>
<dbReference type="PathwayCommons" id="Q9HAA7"/>
<dbReference type="Pharos" id="Q9HAA7">
    <property type="development level" value="Tdark"/>
</dbReference>
<dbReference type="Proteomes" id="UP000005640">
    <property type="component" value="Unplaced"/>
</dbReference>
<dbReference type="RNAct" id="Q9HAA7">
    <property type="molecule type" value="protein"/>
</dbReference>
<organism>
    <name type="scientific">Homo sapiens</name>
    <name type="common">Human</name>
    <dbReference type="NCBI Taxonomy" id="9606"/>
    <lineage>
        <taxon>Eukaryota</taxon>
        <taxon>Metazoa</taxon>
        <taxon>Chordata</taxon>
        <taxon>Craniata</taxon>
        <taxon>Vertebrata</taxon>
        <taxon>Euteleostomi</taxon>
        <taxon>Mammalia</taxon>
        <taxon>Eutheria</taxon>
        <taxon>Euarchontoglires</taxon>
        <taxon>Primates</taxon>
        <taxon>Haplorrhini</taxon>
        <taxon>Catarrhini</taxon>
        <taxon>Hominidae</taxon>
        <taxon>Homo</taxon>
    </lineage>
</organism>
<proteinExistence type="uncertain"/>
<evidence type="ECO:0000256" key="1">
    <source>
        <dbReference type="SAM" id="MobiDB-lite"/>
    </source>
</evidence>
<evidence type="ECO:0000305" key="2"/>
<feature type="chain" id="PRO_0000348275" description="Putative uncharacterized protein FLJ11871">
    <location>
        <begin position="1"/>
        <end position="133"/>
    </location>
</feature>
<feature type="region of interest" description="Disordered" evidence="1">
    <location>
        <begin position="107"/>
        <end position="133"/>
    </location>
</feature>
<sequence>MLFGIRILVNTPSPLVTGLHHYNPSIHRDQGECANQWRKGPGSAHLAGLAGRCSLINTPSPLVTGLQRYNPSMDRAQGMCASLEEEAGLCKPLWAWWELQSHKHSQTSHHRAAGLQSQHAPGSGRVRITGGKV</sequence>
<reference key="1">
    <citation type="journal article" date="2004" name="Nat. Genet.">
        <title>Complete sequencing and characterization of 21,243 full-length human cDNAs.</title>
        <authorList>
            <person name="Ota T."/>
            <person name="Suzuki Y."/>
            <person name="Nishikawa T."/>
            <person name="Otsuki T."/>
            <person name="Sugiyama T."/>
            <person name="Irie R."/>
            <person name="Wakamatsu A."/>
            <person name="Hayashi K."/>
            <person name="Sato H."/>
            <person name="Nagai K."/>
            <person name="Kimura K."/>
            <person name="Makita H."/>
            <person name="Sekine M."/>
            <person name="Obayashi M."/>
            <person name="Nishi T."/>
            <person name="Shibahara T."/>
            <person name="Tanaka T."/>
            <person name="Ishii S."/>
            <person name="Yamamoto J."/>
            <person name="Saito K."/>
            <person name="Kawai Y."/>
            <person name="Isono Y."/>
            <person name="Nakamura Y."/>
            <person name="Nagahari K."/>
            <person name="Murakami K."/>
            <person name="Yasuda T."/>
            <person name="Iwayanagi T."/>
            <person name="Wagatsuma M."/>
            <person name="Shiratori A."/>
            <person name="Sudo H."/>
            <person name="Hosoiri T."/>
            <person name="Kaku Y."/>
            <person name="Kodaira H."/>
            <person name="Kondo H."/>
            <person name="Sugawara M."/>
            <person name="Takahashi M."/>
            <person name="Kanda K."/>
            <person name="Yokoi T."/>
            <person name="Furuya T."/>
            <person name="Kikkawa E."/>
            <person name="Omura Y."/>
            <person name="Abe K."/>
            <person name="Kamihara K."/>
            <person name="Katsuta N."/>
            <person name="Sato K."/>
            <person name="Tanikawa M."/>
            <person name="Yamazaki M."/>
            <person name="Ninomiya K."/>
            <person name="Ishibashi T."/>
            <person name="Yamashita H."/>
            <person name="Murakawa K."/>
            <person name="Fujimori K."/>
            <person name="Tanai H."/>
            <person name="Kimata M."/>
            <person name="Watanabe M."/>
            <person name="Hiraoka S."/>
            <person name="Chiba Y."/>
            <person name="Ishida S."/>
            <person name="Ono Y."/>
            <person name="Takiguchi S."/>
            <person name="Watanabe S."/>
            <person name="Yosida M."/>
            <person name="Hotuta T."/>
            <person name="Kusano J."/>
            <person name="Kanehori K."/>
            <person name="Takahashi-Fujii A."/>
            <person name="Hara H."/>
            <person name="Tanase T.-O."/>
            <person name="Nomura Y."/>
            <person name="Togiya S."/>
            <person name="Komai F."/>
            <person name="Hara R."/>
            <person name="Takeuchi K."/>
            <person name="Arita M."/>
            <person name="Imose N."/>
            <person name="Musashino K."/>
            <person name="Yuuki H."/>
            <person name="Oshima A."/>
            <person name="Sasaki N."/>
            <person name="Aotsuka S."/>
            <person name="Yoshikawa Y."/>
            <person name="Matsunawa H."/>
            <person name="Ichihara T."/>
            <person name="Shiohata N."/>
            <person name="Sano S."/>
            <person name="Moriya S."/>
            <person name="Momiyama H."/>
            <person name="Satoh N."/>
            <person name="Takami S."/>
            <person name="Terashima Y."/>
            <person name="Suzuki O."/>
            <person name="Nakagawa S."/>
            <person name="Senoh A."/>
            <person name="Mizoguchi H."/>
            <person name="Goto Y."/>
            <person name="Shimizu F."/>
            <person name="Wakebe H."/>
            <person name="Hishigaki H."/>
            <person name="Watanabe T."/>
            <person name="Sugiyama A."/>
            <person name="Takemoto M."/>
            <person name="Kawakami B."/>
            <person name="Yamazaki M."/>
            <person name="Watanabe K."/>
            <person name="Kumagai A."/>
            <person name="Itakura S."/>
            <person name="Fukuzumi Y."/>
            <person name="Fujimori Y."/>
            <person name="Komiyama M."/>
            <person name="Tashiro H."/>
            <person name="Tanigami A."/>
            <person name="Fujiwara T."/>
            <person name="Ono T."/>
            <person name="Yamada K."/>
            <person name="Fujii Y."/>
            <person name="Ozaki K."/>
            <person name="Hirao M."/>
            <person name="Ohmori Y."/>
            <person name="Kawabata A."/>
            <person name="Hikiji T."/>
            <person name="Kobatake N."/>
            <person name="Inagaki H."/>
            <person name="Ikema Y."/>
            <person name="Okamoto S."/>
            <person name="Okitani R."/>
            <person name="Kawakami T."/>
            <person name="Noguchi S."/>
            <person name="Itoh T."/>
            <person name="Shigeta K."/>
            <person name="Senba T."/>
            <person name="Matsumura K."/>
            <person name="Nakajima Y."/>
            <person name="Mizuno T."/>
            <person name="Morinaga M."/>
            <person name="Sasaki M."/>
            <person name="Togashi T."/>
            <person name="Oyama M."/>
            <person name="Hata H."/>
            <person name="Watanabe M."/>
            <person name="Komatsu T."/>
            <person name="Mizushima-Sugano J."/>
            <person name="Satoh T."/>
            <person name="Shirai Y."/>
            <person name="Takahashi Y."/>
            <person name="Nakagawa K."/>
            <person name="Okumura K."/>
            <person name="Nagase T."/>
            <person name="Nomura N."/>
            <person name="Kikuchi H."/>
            <person name="Masuho Y."/>
            <person name="Yamashita R."/>
            <person name="Nakai K."/>
            <person name="Yada T."/>
            <person name="Nakamura Y."/>
            <person name="Ohara O."/>
            <person name="Isogai T."/>
            <person name="Sugano S."/>
        </authorList>
    </citation>
    <scope>NUCLEOTIDE SEQUENCE [LARGE SCALE MRNA]</scope>
    <source>
        <tissue>Embryo</tissue>
    </source>
</reference>
<keyword id="KW-1185">Reference proteome</keyword>
<protein>
    <recommendedName>
        <fullName>Putative uncharacterized protein FLJ11871</fullName>
    </recommendedName>
</protein>